<keyword id="KW-1003">Cell membrane</keyword>
<keyword id="KW-0472">Membrane</keyword>
<keyword id="KW-1185">Reference proteome</keyword>
<keyword id="KW-0677">Repeat</keyword>
<keyword id="KW-0812">Transmembrane</keyword>
<keyword id="KW-1133">Transmembrane helix</keyword>
<keyword id="KW-0813">Transport</keyword>
<dbReference type="EMBL" id="L42023">
    <property type="protein sequence ID" value="AAC22677.1"/>
    <property type="molecule type" value="Genomic_DNA"/>
</dbReference>
<dbReference type="SMR" id="O86231"/>
<dbReference type="STRING" id="71421.HI_1017"/>
<dbReference type="EnsemblBacteria" id="AAC22677">
    <property type="protein sequence ID" value="AAC22677"/>
    <property type="gene ID" value="HI_1017"/>
</dbReference>
<dbReference type="KEGG" id="hin:HI_1017"/>
<dbReference type="eggNOG" id="COG0580">
    <property type="taxonomic scope" value="Bacteria"/>
</dbReference>
<dbReference type="HOGENOM" id="CLU_020019_9_2_6"/>
<dbReference type="PhylomeDB" id="O86231"/>
<dbReference type="Proteomes" id="UP000000579">
    <property type="component" value="Chromosome"/>
</dbReference>
<dbReference type="GO" id="GO:0005886">
    <property type="term" value="C:plasma membrane"/>
    <property type="evidence" value="ECO:0000318"/>
    <property type="project" value="GO_Central"/>
</dbReference>
<dbReference type="GO" id="GO:0015254">
    <property type="term" value="F:glycerol channel activity"/>
    <property type="evidence" value="ECO:0000318"/>
    <property type="project" value="GO_Central"/>
</dbReference>
<dbReference type="GO" id="GO:0015793">
    <property type="term" value="P:glycerol transmembrane transport"/>
    <property type="evidence" value="ECO:0000318"/>
    <property type="project" value="GO_Central"/>
</dbReference>
<dbReference type="Gene3D" id="1.20.1080.10">
    <property type="entry name" value="Glycerol uptake facilitator protein"/>
    <property type="match status" value="1"/>
</dbReference>
<dbReference type="InterPro" id="IPR023271">
    <property type="entry name" value="Aquaporin-like"/>
</dbReference>
<dbReference type="InterPro" id="IPR000425">
    <property type="entry name" value="MIP"/>
</dbReference>
<dbReference type="InterPro" id="IPR050363">
    <property type="entry name" value="MIP/Aquaporin"/>
</dbReference>
<dbReference type="PANTHER" id="PTHR43829">
    <property type="entry name" value="AQUAPORIN OR AQUAGLYCEROPORIN RELATED"/>
    <property type="match status" value="1"/>
</dbReference>
<dbReference type="PANTHER" id="PTHR43829:SF9">
    <property type="entry name" value="AQUAPORIN-9"/>
    <property type="match status" value="1"/>
</dbReference>
<dbReference type="Pfam" id="PF00230">
    <property type="entry name" value="MIP"/>
    <property type="match status" value="1"/>
</dbReference>
<dbReference type="PRINTS" id="PR00783">
    <property type="entry name" value="MINTRINSICP"/>
</dbReference>
<dbReference type="SUPFAM" id="SSF81338">
    <property type="entry name" value="Aquaporin-like"/>
    <property type="match status" value="1"/>
</dbReference>
<comment type="subcellular location">
    <subcellularLocation>
        <location evidence="2">Cell membrane</location>
        <topology evidence="2">Multi-pass membrane protein</topology>
    </subcellularLocation>
</comment>
<comment type="domain">
    <text>Aquaporins contain two tandem repeats each containing three membrane-spanning domains and a pore-forming loop with the signature motif Asn-Pro-Ala (NPA).</text>
</comment>
<comment type="similarity">
    <text evidence="2">Belongs to the MIP/aquaporin (TC 1.A.8) family.</text>
</comment>
<gene>
    <name type="ordered locus">HI_1017</name>
</gene>
<sequence length="213" mass="24053">MCQYFLKKIRNVWERWFTYRLWFGLSMVSIAVIFGPLTGAHVNPAVTIDFWEVGKFPTELVLVYIIAQCIGAFIVALIVWLLFKDHLDEEDNQNCQLGSFATIATNSNNLRNLLSEIVTTFSLLFILFTLNHQQPTNGVAMFFVFTGVAGGVMSFGGLTSYAINPARDFMLRLIHAIMPIKNKGTSNFDYAWVPVLRPVIGAILAAWLYKALF</sequence>
<organism>
    <name type="scientific">Haemophilus influenzae (strain ATCC 51907 / DSM 11121 / KW20 / Rd)</name>
    <dbReference type="NCBI Taxonomy" id="71421"/>
    <lineage>
        <taxon>Bacteria</taxon>
        <taxon>Pseudomonadati</taxon>
        <taxon>Pseudomonadota</taxon>
        <taxon>Gammaproteobacteria</taxon>
        <taxon>Pasteurellales</taxon>
        <taxon>Pasteurellaceae</taxon>
        <taxon>Haemophilus</taxon>
    </lineage>
</organism>
<evidence type="ECO:0000255" key="1"/>
<evidence type="ECO:0000305" key="2"/>
<accession>O86231</accession>
<feature type="chain" id="PRO_0000064096" description="Uncharacterized aquaporin-like protein HI_1017">
    <location>
        <begin position="1"/>
        <end position="213"/>
    </location>
</feature>
<feature type="transmembrane region" description="Helical" evidence="1">
    <location>
        <begin position="22"/>
        <end position="42"/>
    </location>
</feature>
<feature type="transmembrane region" description="Helical" evidence="1">
    <location>
        <begin position="63"/>
        <end position="83"/>
    </location>
</feature>
<feature type="transmembrane region" description="Helical" evidence="1">
    <location>
        <begin position="112"/>
        <end position="132"/>
    </location>
</feature>
<feature type="transmembrane region" description="Helical" evidence="1">
    <location>
        <begin position="138"/>
        <end position="158"/>
    </location>
</feature>
<feature type="transmembrane region" description="Helical" evidence="1">
    <location>
        <begin position="188"/>
        <end position="208"/>
    </location>
</feature>
<feature type="short sequence motif" description="NPA 1">
    <location>
        <begin position="43"/>
        <end position="45"/>
    </location>
</feature>
<feature type="short sequence motif" description="NPA 2">
    <location>
        <begin position="164"/>
        <end position="166"/>
    </location>
</feature>
<protein>
    <recommendedName>
        <fullName>Uncharacterized aquaporin-like protein HI_1017</fullName>
    </recommendedName>
</protein>
<proteinExistence type="inferred from homology"/>
<name>Y1017_HAEIN</name>
<reference key="1">
    <citation type="journal article" date="1995" name="Science">
        <title>Whole-genome random sequencing and assembly of Haemophilus influenzae Rd.</title>
        <authorList>
            <person name="Fleischmann R.D."/>
            <person name="Adams M.D."/>
            <person name="White O."/>
            <person name="Clayton R.A."/>
            <person name="Kirkness E.F."/>
            <person name="Kerlavage A.R."/>
            <person name="Bult C.J."/>
            <person name="Tomb J.-F."/>
            <person name="Dougherty B.A."/>
            <person name="Merrick J.M."/>
            <person name="McKenney K."/>
            <person name="Sutton G.G."/>
            <person name="FitzHugh W."/>
            <person name="Fields C.A."/>
            <person name="Gocayne J.D."/>
            <person name="Scott J.D."/>
            <person name="Shirley R."/>
            <person name="Liu L.-I."/>
            <person name="Glodek A."/>
            <person name="Kelley J.M."/>
            <person name="Weidman J.F."/>
            <person name="Phillips C.A."/>
            <person name="Spriggs T."/>
            <person name="Hedblom E."/>
            <person name="Cotton M.D."/>
            <person name="Utterback T.R."/>
            <person name="Hanna M.C."/>
            <person name="Nguyen D.T."/>
            <person name="Saudek D.M."/>
            <person name="Brandon R.C."/>
            <person name="Fine L.D."/>
            <person name="Fritchman J.L."/>
            <person name="Fuhrmann J.L."/>
            <person name="Geoghagen N.S.M."/>
            <person name="Gnehm C.L."/>
            <person name="McDonald L.A."/>
            <person name="Small K.V."/>
            <person name="Fraser C.M."/>
            <person name="Smith H.O."/>
            <person name="Venter J.C."/>
        </authorList>
    </citation>
    <scope>NUCLEOTIDE SEQUENCE [LARGE SCALE GENOMIC DNA]</scope>
    <source>
        <strain>ATCC 51907 / DSM 11121 / KW20 / Rd</strain>
    </source>
</reference>
<reference key="2">
    <citation type="submission" date="1998-05" db="EMBL/GenBank/DDBJ databases">
        <authorList>
            <person name="White O."/>
            <person name="Clayton R.A."/>
            <person name="Kerlavage A.R."/>
            <person name="Fleischmann R.D."/>
            <person name="Peterson J."/>
            <person name="Hickey E."/>
            <person name="Dodson R."/>
            <person name="Gwinn M."/>
        </authorList>
    </citation>
    <scope>IDENTIFICATION</scope>
</reference>